<gene>
    <name evidence="1" type="primary">apt</name>
    <name type="ordered locus">ASA_2089</name>
</gene>
<comment type="function">
    <text evidence="1">Catalyzes a salvage reaction resulting in the formation of AMP, that is energically less costly than de novo synthesis.</text>
</comment>
<comment type="catalytic activity">
    <reaction evidence="1">
        <text>AMP + diphosphate = 5-phospho-alpha-D-ribose 1-diphosphate + adenine</text>
        <dbReference type="Rhea" id="RHEA:16609"/>
        <dbReference type="ChEBI" id="CHEBI:16708"/>
        <dbReference type="ChEBI" id="CHEBI:33019"/>
        <dbReference type="ChEBI" id="CHEBI:58017"/>
        <dbReference type="ChEBI" id="CHEBI:456215"/>
        <dbReference type="EC" id="2.4.2.7"/>
    </reaction>
</comment>
<comment type="pathway">
    <text evidence="1">Purine metabolism; AMP biosynthesis via salvage pathway; AMP from adenine: step 1/1.</text>
</comment>
<comment type="subunit">
    <text evidence="1">Homodimer.</text>
</comment>
<comment type="subcellular location">
    <subcellularLocation>
        <location evidence="1">Cytoplasm</location>
    </subcellularLocation>
</comment>
<comment type="similarity">
    <text evidence="1">Belongs to the purine/pyrimidine phosphoribosyltransferase family.</text>
</comment>
<protein>
    <recommendedName>
        <fullName evidence="1">Adenine phosphoribosyltransferase</fullName>
        <shortName evidence="1">APRT</shortName>
        <ecNumber evidence="1">2.4.2.7</ecNumber>
    </recommendedName>
</protein>
<evidence type="ECO:0000255" key="1">
    <source>
        <dbReference type="HAMAP-Rule" id="MF_00004"/>
    </source>
</evidence>
<proteinExistence type="inferred from homology"/>
<accession>A4SMN3</accession>
<name>APT_AERS4</name>
<reference key="1">
    <citation type="journal article" date="2008" name="BMC Genomics">
        <title>The genome of Aeromonas salmonicida subsp. salmonicida A449: insights into the evolution of a fish pathogen.</title>
        <authorList>
            <person name="Reith M.E."/>
            <person name="Singh R.K."/>
            <person name="Curtis B."/>
            <person name="Boyd J.M."/>
            <person name="Bouevitch A."/>
            <person name="Kimball J."/>
            <person name="Munholland J."/>
            <person name="Murphy C."/>
            <person name="Sarty D."/>
            <person name="Williams J."/>
            <person name="Nash J.H."/>
            <person name="Johnson S.C."/>
            <person name="Brown L.L."/>
        </authorList>
    </citation>
    <scope>NUCLEOTIDE SEQUENCE [LARGE SCALE GENOMIC DNA]</scope>
    <source>
        <strain>A449</strain>
    </source>
</reference>
<dbReference type="EC" id="2.4.2.7" evidence="1"/>
<dbReference type="EMBL" id="CP000644">
    <property type="protein sequence ID" value="ABO90155.1"/>
    <property type="molecule type" value="Genomic_DNA"/>
</dbReference>
<dbReference type="RefSeq" id="WP_005311419.1">
    <property type="nucleotide sequence ID" value="NC_009348.1"/>
</dbReference>
<dbReference type="SMR" id="A4SMN3"/>
<dbReference type="STRING" id="29491.GCA_000820065_00698"/>
<dbReference type="KEGG" id="asa:ASA_2089"/>
<dbReference type="eggNOG" id="COG0503">
    <property type="taxonomic scope" value="Bacteria"/>
</dbReference>
<dbReference type="HOGENOM" id="CLU_063339_3_0_6"/>
<dbReference type="UniPathway" id="UPA00588">
    <property type="reaction ID" value="UER00646"/>
</dbReference>
<dbReference type="Proteomes" id="UP000000225">
    <property type="component" value="Chromosome"/>
</dbReference>
<dbReference type="GO" id="GO:0005829">
    <property type="term" value="C:cytosol"/>
    <property type="evidence" value="ECO:0007669"/>
    <property type="project" value="TreeGrafter"/>
</dbReference>
<dbReference type="GO" id="GO:0003999">
    <property type="term" value="F:adenine phosphoribosyltransferase activity"/>
    <property type="evidence" value="ECO:0007669"/>
    <property type="project" value="UniProtKB-UniRule"/>
</dbReference>
<dbReference type="GO" id="GO:0006168">
    <property type="term" value="P:adenine salvage"/>
    <property type="evidence" value="ECO:0007669"/>
    <property type="project" value="InterPro"/>
</dbReference>
<dbReference type="GO" id="GO:0044209">
    <property type="term" value="P:AMP salvage"/>
    <property type="evidence" value="ECO:0007669"/>
    <property type="project" value="UniProtKB-UniRule"/>
</dbReference>
<dbReference type="GO" id="GO:0006166">
    <property type="term" value="P:purine ribonucleoside salvage"/>
    <property type="evidence" value="ECO:0007669"/>
    <property type="project" value="UniProtKB-KW"/>
</dbReference>
<dbReference type="CDD" id="cd06223">
    <property type="entry name" value="PRTases_typeI"/>
    <property type="match status" value="1"/>
</dbReference>
<dbReference type="FunFam" id="3.40.50.2020:FF:000004">
    <property type="entry name" value="Adenine phosphoribosyltransferase"/>
    <property type="match status" value="1"/>
</dbReference>
<dbReference type="Gene3D" id="3.40.50.2020">
    <property type="match status" value="1"/>
</dbReference>
<dbReference type="HAMAP" id="MF_00004">
    <property type="entry name" value="Aden_phosphoribosyltr"/>
    <property type="match status" value="1"/>
</dbReference>
<dbReference type="InterPro" id="IPR005764">
    <property type="entry name" value="Ade_phspho_trans"/>
</dbReference>
<dbReference type="InterPro" id="IPR050120">
    <property type="entry name" value="Adenine_PRTase"/>
</dbReference>
<dbReference type="InterPro" id="IPR000836">
    <property type="entry name" value="PRibTrfase_dom"/>
</dbReference>
<dbReference type="InterPro" id="IPR029057">
    <property type="entry name" value="PRTase-like"/>
</dbReference>
<dbReference type="NCBIfam" id="TIGR01090">
    <property type="entry name" value="apt"/>
    <property type="match status" value="1"/>
</dbReference>
<dbReference type="NCBIfam" id="NF002632">
    <property type="entry name" value="PRK02304.1-1"/>
    <property type="match status" value="1"/>
</dbReference>
<dbReference type="NCBIfam" id="NF002634">
    <property type="entry name" value="PRK02304.1-3"/>
    <property type="match status" value="1"/>
</dbReference>
<dbReference type="NCBIfam" id="NF002636">
    <property type="entry name" value="PRK02304.1-5"/>
    <property type="match status" value="1"/>
</dbReference>
<dbReference type="PANTHER" id="PTHR11776">
    <property type="entry name" value="ADENINE PHOSPHORIBOSYLTRANSFERASE"/>
    <property type="match status" value="1"/>
</dbReference>
<dbReference type="PANTHER" id="PTHR11776:SF7">
    <property type="entry name" value="PHOSPHORIBOSYLTRANSFERASE DOMAIN-CONTAINING PROTEIN"/>
    <property type="match status" value="1"/>
</dbReference>
<dbReference type="Pfam" id="PF00156">
    <property type="entry name" value="Pribosyltran"/>
    <property type="match status" value="1"/>
</dbReference>
<dbReference type="SUPFAM" id="SSF53271">
    <property type="entry name" value="PRTase-like"/>
    <property type="match status" value="1"/>
</dbReference>
<dbReference type="PROSITE" id="PS00103">
    <property type="entry name" value="PUR_PYR_PR_TRANSFER"/>
    <property type="match status" value="1"/>
</dbReference>
<sequence length="181" mass="19177">MNPETLKFIEASIKTIPDYPKPGILFRDITSLIENAEAFKATIDLLAEHYRDQGITKIVGTEARGFIFGAPVAFAMGLGFVPVRKPGKLPRAVIEESYALEYGTDTLQLHTDAIVPGDKVLVVDDLLATGGTVDATVKLIRRAGGEVADAAFIISLPSLGGDARLTAAGIKVVSLVELAGE</sequence>
<organism>
    <name type="scientific">Aeromonas salmonicida (strain A449)</name>
    <dbReference type="NCBI Taxonomy" id="382245"/>
    <lineage>
        <taxon>Bacteria</taxon>
        <taxon>Pseudomonadati</taxon>
        <taxon>Pseudomonadota</taxon>
        <taxon>Gammaproteobacteria</taxon>
        <taxon>Aeromonadales</taxon>
        <taxon>Aeromonadaceae</taxon>
        <taxon>Aeromonas</taxon>
    </lineage>
</organism>
<keyword id="KW-0963">Cytoplasm</keyword>
<keyword id="KW-0328">Glycosyltransferase</keyword>
<keyword id="KW-0660">Purine salvage</keyword>
<keyword id="KW-0808">Transferase</keyword>
<feature type="chain" id="PRO_1000000253" description="Adenine phosphoribosyltransferase">
    <location>
        <begin position="1"/>
        <end position="181"/>
    </location>
</feature>